<protein>
    <recommendedName>
        <fullName evidence="1">4-hydroxy-tetrahydrodipicolinate synthase</fullName>
        <shortName evidence="1">HTPA synthase</shortName>
        <ecNumber evidence="1">4.3.3.7</ecNumber>
    </recommendedName>
</protein>
<sequence>MFSGSIVALVTPMRNDSVDVHHLRELVEFHIAKGTHALVAAGTTGEAGTLSHSEKLLVIKTVIEQAKERVPVIAGTAMNATKDCIELTQQAMEYGAHAALIMTPAYIKPTQEGLYLHYSHIAQSVAIPIILYNVPGRTACDMLPETVARLAKISNIIGIKEATGQMTRLQQILRLCEGSIDVYSGDDLTAAQWLLAGAKGVISVTANVAAKLMAKMCDLAMDDDQAGCLRIQEQLMPLHELLFVESNPIPVKWAMNKMGLIGGELRLPMTELSEKHHQALEKVLKNLELI</sequence>
<name>DAPA_LEGPH</name>
<proteinExistence type="inferred from homology"/>
<reference key="1">
    <citation type="journal article" date="2004" name="Science">
        <title>The genomic sequence of the accidental pathogen Legionella pneumophila.</title>
        <authorList>
            <person name="Chien M."/>
            <person name="Morozova I."/>
            <person name="Shi S."/>
            <person name="Sheng H."/>
            <person name="Chen J."/>
            <person name="Gomez S.M."/>
            <person name="Asamani G."/>
            <person name="Hill K."/>
            <person name="Nuara J."/>
            <person name="Feder M."/>
            <person name="Rineer J."/>
            <person name="Greenberg J.J."/>
            <person name="Steshenko V."/>
            <person name="Park S.H."/>
            <person name="Zhao B."/>
            <person name="Teplitskaya E."/>
            <person name="Edwards J.R."/>
            <person name="Pampou S."/>
            <person name="Georghiou A."/>
            <person name="Chou I.-C."/>
            <person name="Iannuccilli W."/>
            <person name="Ulz M.E."/>
            <person name="Kim D.H."/>
            <person name="Geringer-Sameth A."/>
            <person name="Goldsberry C."/>
            <person name="Morozov P."/>
            <person name="Fischer S.G."/>
            <person name="Segal G."/>
            <person name="Qu X."/>
            <person name="Rzhetsky A."/>
            <person name="Zhang P."/>
            <person name="Cayanis E."/>
            <person name="De Jong P.J."/>
            <person name="Ju J."/>
            <person name="Kalachikov S."/>
            <person name="Shuman H.A."/>
            <person name="Russo J.J."/>
        </authorList>
    </citation>
    <scope>NUCLEOTIDE SEQUENCE [LARGE SCALE GENOMIC DNA]</scope>
    <source>
        <strain>Philadelphia 1 / ATCC 33152 / DSM 7513</strain>
    </source>
</reference>
<organism>
    <name type="scientific">Legionella pneumophila subsp. pneumophila (strain Philadelphia 1 / ATCC 33152 / DSM 7513)</name>
    <dbReference type="NCBI Taxonomy" id="272624"/>
    <lineage>
        <taxon>Bacteria</taxon>
        <taxon>Pseudomonadati</taxon>
        <taxon>Pseudomonadota</taxon>
        <taxon>Gammaproteobacteria</taxon>
        <taxon>Legionellales</taxon>
        <taxon>Legionellaceae</taxon>
        <taxon>Legionella</taxon>
    </lineage>
</organism>
<comment type="function">
    <text evidence="1">Catalyzes the condensation of (S)-aspartate-beta-semialdehyde [(S)-ASA] and pyruvate to 4-hydroxy-tetrahydrodipicolinate (HTPA).</text>
</comment>
<comment type="catalytic activity">
    <reaction evidence="1">
        <text>L-aspartate 4-semialdehyde + pyruvate = (2S,4S)-4-hydroxy-2,3,4,5-tetrahydrodipicolinate + H2O + H(+)</text>
        <dbReference type="Rhea" id="RHEA:34171"/>
        <dbReference type="ChEBI" id="CHEBI:15361"/>
        <dbReference type="ChEBI" id="CHEBI:15377"/>
        <dbReference type="ChEBI" id="CHEBI:15378"/>
        <dbReference type="ChEBI" id="CHEBI:67139"/>
        <dbReference type="ChEBI" id="CHEBI:537519"/>
        <dbReference type="EC" id="4.3.3.7"/>
    </reaction>
</comment>
<comment type="pathway">
    <text evidence="1">Amino-acid biosynthesis; L-lysine biosynthesis via DAP pathway; (S)-tetrahydrodipicolinate from L-aspartate: step 3/4.</text>
</comment>
<comment type="subunit">
    <text evidence="1">Homotetramer; dimer of dimers.</text>
</comment>
<comment type="subcellular location">
    <subcellularLocation>
        <location evidence="1">Cytoplasm</location>
    </subcellularLocation>
</comment>
<comment type="similarity">
    <text evidence="1">Belongs to the DapA family.</text>
</comment>
<comment type="caution">
    <text evidence="2">Was originally thought to be a dihydrodipicolinate synthase (DHDPS), catalyzing the condensation of (S)-aspartate-beta-semialdehyde [(S)-ASA] and pyruvate to dihydrodipicolinate (DHDP). However, it was shown in E.coli that the product of the enzymatic reaction is not dihydrodipicolinate but in fact (4S)-4-hydroxy-2,3,4,5-tetrahydro-(2S)-dipicolinic acid (HTPA), and that the consecutive dehydration reaction leading to DHDP is not spontaneous but catalyzed by DapB.</text>
</comment>
<accession>Q5ZT51</accession>
<feature type="chain" id="PRO_1000050205" description="4-hydroxy-tetrahydrodipicolinate synthase">
    <location>
        <begin position="1"/>
        <end position="290"/>
    </location>
</feature>
<feature type="active site" description="Proton donor/acceptor" evidence="1">
    <location>
        <position position="132"/>
    </location>
</feature>
<feature type="active site" description="Schiff-base intermediate with substrate" evidence="1">
    <location>
        <position position="160"/>
    </location>
</feature>
<feature type="binding site" evidence="1">
    <location>
        <position position="44"/>
    </location>
    <ligand>
        <name>pyruvate</name>
        <dbReference type="ChEBI" id="CHEBI:15361"/>
    </ligand>
</feature>
<feature type="binding site" evidence="1">
    <location>
        <position position="202"/>
    </location>
    <ligand>
        <name>pyruvate</name>
        <dbReference type="ChEBI" id="CHEBI:15361"/>
    </ligand>
</feature>
<feature type="site" description="Part of a proton relay during catalysis" evidence="1">
    <location>
        <position position="43"/>
    </location>
</feature>
<feature type="site" description="Part of a proton relay during catalysis" evidence="1">
    <location>
        <position position="106"/>
    </location>
</feature>
<evidence type="ECO:0000255" key="1">
    <source>
        <dbReference type="HAMAP-Rule" id="MF_00418"/>
    </source>
</evidence>
<evidence type="ECO:0000305" key="2"/>
<keyword id="KW-0028">Amino-acid biosynthesis</keyword>
<keyword id="KW-0963">Cytoplasm</keyword>
<keyword id="KW-0220">Diaminopimelate biosynthesis</keyword>
<keyword id="KW-0456">Lyase</keyword>
<keyword id="KW-0457">Lysine biosynthesis</keyword>
<keyword id="KW-1185">Reference proteome</keyword>
<keyword id="KW-0704">Schiff base</keyword>
<gene>
    <name evidence="1" type="primary">dapA</name>
    <name type="ordered locus">lpg2314</name>
</gene>
<dbReference type="EC" id="4.3.3.7" evidence="1"/>
<dbReference type="EMBL" id="AE017354">
    <property type="protein sequence ID" value="AAU28376.1"/>
    <property type="molecule type" value="Genomic_DNA"/>
</dbReference>
<dbReference type="RefSeq" id="WP_010948020.1">
    <property type="nucleotide sequence ID" value="NC_002942.5"/>
</dbReference>
<dbReference type="RefSeq" id="YP_096323.1">
    <property type="nucleotide sequence ID" value="NC_002942.5"/>
</dbReference>
<dbReference type="SMR" id="Q5ZT51"/>
<dbReference type="STRING" id="272624.lpg2314"/>
<dbReference type="PaxDb" id="272624-lpg2314"/>
<dbReference type="GeneID" id="57036306"/>
<dbReference type="KEGG" id="lpn:lpg2314"/>
<dbReference type="PATRIC" id="fig|272624.6.peg.2429"/>
<dbReference type="eggNOG" id="COG0329">
    <property type="taxonomic scope" value="Bacteria"/>
</dbReference>
<dbReference type="HOGENOM" id="CLU_049343_7_1_6"/>
<dbReference type="OrthoDB" id="9782828at2"/>
<dbReference type="UniPathway" id="UPA00034">
    <property type="reaction ID" value="UER00017"/>
</dbReference>
<dbReference type="Proteomes" id="UP000000609">
    <property type="component" value="Chromosome"/>
</dbReference>
<dbReference type="GO" id="GO:0005829">
    <property type="term" value="C:cytosol"/>
    <property type="evidence" value="ECO:0007669"/>
    <property type="project" value="TreeGrafter"/>
</dbReference>
<dbReference type="GO" id="GO:0008840">
    <property type="term" value="F:4-hydroxy-tetrahydrodipicolinate synthase activity"/>
    <property type="evidence" value="ECO:0007669"/>
    <property type="project" value="UniProtKB-UniRule"/>
</dbReference>
<dbReference type="GO" id="GO:0019877">
    <property type="term" value="P:diaminopimelate biosynthetic process"/>
    <property type="evidence" value="ECO:0007669"/>
    <property type="project" value="UniProtKB-UniRule"/>
</dbReference>
<dbReference type="GO" id="GO:0009089">
    <property type="term" value="P:lysine biosynthetic process via diaminopimelate"/>
    <property type="evidence" value="ECO:0007669"/>
    <property type="project" value="UniProtKB-UniRule"/>
</dbReference>
<dbReference type="CDD" id="cd00950">
    <property type="entry name" value="DHDPS"/>
    <property type="match status" value="1"/>
</dbReference>
<dbReference type="Gene3D" id="3.20.20.70">
    <property type="entry name" value="Aldolase class I"/>
    <property type="match status" value="1"/>
</dbReference>
<dbReference type="HAMAP" id="MF_00418">
    <property type="entry name" value="DapA"/>
    <property type="match status" value="1"/>
</dbReference>
<dbReference type="InterPro" id="IPR013785">
    <property type="entry name" value="Aldolase_TIM"/>
</dbReference>
<dbReference type="InterPro" id="IPR005263">
    <property type="entry name" value="DapA"/>
</dbReference>
<dbReference type="InterPro" id="IPR002220">
    <property type="entry name" value="DapA-like"/>
</dbReference>
<dbReference type="InterPro" id="IPR020625">
    <property type="entry name" value="Schiff_base-form_aldolases_AS"/>
</dbReference>
<dbReference type="InterPro" id="IPR020624">
    <property type="entry name" value="Schiff_base-form_aldolases_CS"/>
</dbReference>
<dbReference type="NCBIfam" id="TIGR00674">
    <property type="entry name" value="dapA"/>
    <property type="match status" value="1"/>
</dbReference>
<dbReference type="PANTHER" id="PTHR12128:SF66">
    <property type="entry name" value="4-HYDROXY-2-OXOGLUTARATE ALDOLASE, MITOCHONDRIAL"/>
    <property type="match status" value="1"/>
</dbReference>
<dbReference type="PANTHER" id="PTHR12128">
    <property type="entry name" value="DIHYDRODIPICOLINATE SYNTHASE"/>
    <property type="match status" value="1"/>
</dbReference>
<dbReference type="Pfam" id="PF00701">
    <property type="entry name" value="DHDPS"/>
    <property type="match status" value="1"/>
</dbReference>
<dbReference type="PIRSF" id="PIRSF001365">
    <property type="entry name" value="DHDPS"/>
    <property type="match status" value="1"/>
</dbReference>
<dbReference type="PRINTS" id="PR00146">
    <property type="entry name" value="DHPICSNTHASE"/>
</dbReference>
<dbReference type="SMART" id="SM01130">
    <property type="entry name" value="DHDPS"/>
    <property type="match status" value="1"/>
</dbReference>
<dbReference type="SUPFAM" id="SSF51569">
    <property type="entry name" value="Aldolase"/>
    <property type="match status" value="1"/>
</dbReference>
<dbReference type="PROSITE" id="PS00665">
    <property type="entry name" value="DHDPS_1"/>
    <property type="match status" value="1"/>
</dbReference>
<dbReference type="PROSITE" id="PS00666">
    <property type="entry name" value="DHDPS_2"/>
    <property type="match status" value="1"/>
</dbReference>